<protein>
    <recommendedName>
        <fullName>Uncharacterized protein At1g24485</fullName>
    </recommendedName>
    <alternativeName>
        <fullName>Arabidopsis thaliana envelope membrane integrase</fullName>
        <shortName>Protein ARTEMIS</shortName>
    </alternativeName>
    <alternativeName>
        <fullName>Receptor without kinase 1</fullName>
    </alternativeName>
</protein>
<comment type="subcellular location">
    <subcellularLocation>
        <location evidence="4">Membrane</location>
        <topology evidence="4">Single-pass type I membrane protein</topology>
    </subcellularLocation>
</comment>
<comment type="alternative products">
    <event type="alternative splicing"/>
    <isoform>
        <id>A5PHT0-1</id>
        <name>1</name>
        <name>rwk1.1</name>
        <sequence type="displayed"/>
    </isoform>
    <isoform>
        <id>A5PHT0-2</id>
        <name>2</name>
        <name>rwk1.2</name>
        <sequence type="described" ref="VSP_036316"/>
    </isoform>
</comment>
<comment type="sequence caution" evidence="4">
    <conflict type="erroneous gene model prediction">
        <sequence resource="EMBL-CDS" id="AAF97960"/>
    </conflict>
</comment>
<organism>
    <name type="scientific">Arabidopsis thaliana</name>
    <name type="common">Mouse-ear cress</name>
    <dbReference type="NCBI Taxonomy" id="3702"/>
    <lineage>
        <taxon>Eukaryota</taxon>
        <taxon>Viridiplantae</taxon>
        <taxon>Streptophyta</taxon>
        <taxon>Embryophyta</taxon>
        <taxon>Tracheophyta</taxon>
        <taxon>Spermatophyta</taxon>
        <taxon>Magnoliopsida</taxon>
        <taxon>eudicotyledons</taxon>
        <taxon>Gunneridae</taxon>
        <taxon>Pentapetalae</taxon>
        <taxon>rosids</taxon>
        <taxon>malvids</taxon>
        <taxon>Brassicales</taxon>
        <taxon>Brassicaceae</taxon>
        <taxon>Camelineae</taxon>
        <taxon>Arabidopsis</taxon>
    </lineage>
</organism>
<sequence length="498" mass="53041">MEESSMAQASLICLLLSFSIIMLSNAADISIDCGSSSSHIDADNRTWVGDTDFVATGLTSKFVPFSKFPAELTTLRYFPTGETNCYTNIPVEKGGKVLVRTRFLYGDYDEESTYPTFDVVYDGKHRYSVVTTTFETVTESEAIFIPENGNISVCFFRTLSSKTPFVSTIEVRRLDDSMYTDLGPKEGFILQQRIAYGAQELVRFPYDPYDRIWMPASVFASHLTSSATSIDTTGADNRPPEIILRTSWSQKDMAFYDIKLPFSGVTFYIVIYFSEPLSLGSDQKRSFNVYYEDKQVGSDLIVPPFGAVTQASLRDVVKTELAYLTFEATPDSTLDPLINALELYVISNSGGSGNGTNSTSTSGGGSPSPGGGSGSPPSTGGGSGSPPSTGGGGGSPSKGGGGGKSGGSNNGDGGTNKASEDEKSADSSGKSGEEKSSSNLALPLGISLPTLLSLGAGGWGVWKYFIKPRRHPESELPLKQNISLQVNMGNATVVNAGQ</sequence>
<evidence type="ECO:0000255" key="1"/>
<evidence type="ECO:0000256" key="2">
    <source>
        <dbReference type="SAM" id="MobiDB-lite"/>
    </source>
</evidence>
<evidence type="ECO:0000303" key="3">
    <source ref="1"/>
</evidence>
<evidence type="ECO:0000305" key="4"/>
<accession>A5PHT0</accession>
<accession>A5PHT1</accession>
<proteinExistence type="evidence at transcript level"/>
<reference key="1">
    <citation type="submission" date="2007-06" db="EMBL/GenBank/DDBJ databases">
        <title>Protein import into chloroplasts.</title>
        <authorList>
            <person name="Gerdes L."/>
        </authorList>
    </citation>
    <scope>NUCLEOTIDE SEQUENCE [MRNA] (ISOFORMS 1 AND 2)</scope>
    <source>
        <strain>cv. Columbia</strain>
    </source>
</reference>
<reference key="2">
    <citation type="journal article" date="2000" name="Nature">
        <title>Sequence and analysis of chromosome 1 of the plant Arabidopsis thaliana.</title>
        <authorList>
            <person name="Theologis A."/>
            <person name="Ecker J.R."/>
            <person name="Palm C.J."/>
            <person name="Federspiel N.A."/>
            <person name="Kaul S."/>
            <person name="White O."/>
            <person name="Alonso J."/>
            <person name="Altafi H."/>
            <person name="Araujo R."/>
            <person name="Bowman C.L."/>
            <person name="Brooks S.Y."/>
            <person name="Buehler E."/>
            <person name="Chan A."/>
            <person name="Chao Q."/>
            <person name="Chen H."/>
            <person name="Cheuk R.F."/>
            <person name="Chin C.W."/>
            <person name="Chung M.K."/>
            <person name="Conn L."/>
            <person name="Conway A.B."/>
            <person name="Conway A.R."/>
            <person name="Creasy T.H."/>
            <person name="Dewar K."/>
            <person name="Dunn P."/>
            <person name="Etgu P."/>
            <person name="Feldblyum T.V."/>
            <person name="Feng J.-D."/>
            <person name="Fong B."/>
            <person name="Fujii C.Y."/>
            <person name="Gill J.E."/>
            <person name="Goldsmith A.D."/>
            <person name="Haas B."/>
            <person name="Hansen N.F."/>
            <person name="Hughes B."/>
            <person name="Huizar L."/>
            <person name="Hunter J.L."/>
            <person name="Jenkins J."/>
            <person name="Johnson-Hopson C."/>
            <person name="Khan S."/>
            <person name="Khaykin E."/>
            <person name="Kim C.J."/>
            <person name="Koo H.L."/>
            <person name="Kremenetskaia I."/>
            <person name="Kurtz D.B."/>
            <person name="Kwan A."/>
            <person name="Lam B."/>
            <person name="Langin-Hooper S."/>
            <person name="Lee A."/>
            <person name="Lee J.M."/>
            <person name="Lenz C.A."/>
            <person name="Li J.H."/>
            <person name="Li Y.-P."/>
            <person name="Lin X."/>
            <person name="Liu S.X."/>
            <person name="Liu Z.A."/>
            <person name="Luros J.S."/>
            <person name="Maiti R."/>
            <person name="Marziali A."/>
            <person name="Militscher J."/>
            <person name="Miranda M."/>
            <person name="Nguyen M."/>
            <person name="Nierman W.C."/>
            <person name="Osborne B.I."/>
            <person name="Pai G."/>
            <person name="Peterson J."/>
            <person name="Pham P.K."/>
            <person name="Rizzo M."/>
            <person name="Rooney T."/>
            <person name="Rowley D."/>
            <person name="Sakano H."/>
            <person name="Salzberg S.L."/>
            <person name="Schwartz J.R."/>
            <person name="Shinn P."/>
            <person name="Southwick A.M."/>
            <person name="Sun H."/>
            <person name="Tallon L.J."/>
            <person name="Tambunga G."/>
            <person name="Toriumi M.J."/>
            <person name="Town C.D."/>
            <person name="Utterback T."/>
            <person name="Van Aken S."/>
            <person name="Vaysberg M."/>
            <person name="Vysotskaia V.S."/>
            <person name="Walker M."/>
            <person name="Wu D."/>
            <person name="Yu G."/>
            <person name="Fraser C.M."/>
            <person name="Venter J.C."/>
            <person name="Davis R.W."/>
        </authorList>
    </citation>
    <scope>NUCLEOTIDE SEQUENCE [LARGE SCALE GENOMIC DNA]</scope>
    <source>
        <strain>cv. Columbia</strain>
    </source>
</reference>
<reference key="3">
    <citation type="journal article" date="2017" name="Plant J.">
        <title>Araport11: a complete reannotation of the Arabidopsis thaliana reference genome.</title>
        <authorList>
            <person name="Cheng C.Y."/>
            <person name="Krishnakumar V."/>
            <person name="Chan A.P."/>
            <person name="Thibaud-Nissen F."/>
            <person name="Schobel S."/>
            <person name="Town C.D."/>
        </authorList>
    </citation>
    <scope>GENOME REANNOTATION</scope>
    <source>
        <strain>cv. Columbia</strain>
    </source>
</reference>
<keyword id="KW-0025">Alternative splicing</keyword>
<keyword id="KW-0325">Glycoprotein</keyword>
<keyword id="KW-0472">Membrane</keyword>
<keyword id="KW-1185">Reference proteome</keyword>
<keyword id="KW-0732">Signal</keyword>
<keyword id="KW-0812">Transmembrane</keyword>
<keyword id="KW-1133">Transmembrane helix</keyword>
<feature type="signal peptide" evidence="1">
    <location>
        <begin position="1"/>
        <end position="26"/>
    </location>
</feature>
<feature type="chain" id="PRO_0000363608" description="Uncharacterized protein At1g24485">
    <location>
        <begin position="27"/>
        <end position="498"/>
    </location>
</feature>
<feature type="topological domain" description="Extracellular" evidence="1">
    <location>
        <begin position="27"/>
        <end position="441"/>
    </location>
</feature>
<feature type="transmembrane region" description="Helical" evidence="1">
    <location>
        <begin position="442"/>
        <end position="462"/>
    </location>
</feature>
<feature type="topological domain" description="Cytoplasmic" evidence="1">
    <location>
        <begin position="463"/>
        <end position="498"/>
    </location>
</feature>
<feature type="region of interest" description="Disordered" evidence="2">
    <location>
        <begin position="351"/>
        <end position="439"/>
    </location>
</feature>
<feature type="compositionally biased region" description="Gly residues" evidence="2">
    <location>
        <begin position="362"/>
        <end position="414"/>
    </location>
</feature>
<feature type="compositionally biased region" description="Basic and acidic residues" evidence="2">
    <location>
        <begin position="418"/>
        <end position="436"/>
    </location>
</feature>
<feature type="glycosylation site" description="N-linked (GlcNAc...) asparagine" evidence="1">
    <location>
        <position position="44"/>
    </location>
</feature>
<feature type="glycosylation site" description="N-linked (GlcNAc...) asparagine" evidence="1">
    <location>
        <position position="150"/>
    </location>
</feature>
<feature type="glycosylation site" description="N-linked (GlcNAc...) asparagine" evidence="1">
    <location>
        <position position="354"/>
    </location>
</feature>
<feature type="glycosylation site" description="N-linked (GlcNAc...) asparagine" evidence="1">
    <location>
        <position position="357"/>
    </location>
</feature>
<feature type="splice variant" id="VSP_036316" description="In isoform 2." evidence="3">
    <location>
        <begin position="406"/>
        <end position="425"/>
    </location>
</feature>
<feature type="sequence conflict" description="In Ref. 1; CAN89261/CAN89262." evidence="4" ref="1">
    <original>T</original>
    <variation>A</variation>
    <location>
        <position position="46"/>
    </location>
</feature>
<feature type="sequence conflict" description="In Ref. 1; CAN89261." evidence="4" ref="1">
    <original>E</original>
    <variation>G</variation>
    <location>
        <position position="420"/>
    </location>
</feature>
<name>Y1448_ARATH</name>
<dbReference type="EMBL" id="AC000103">
    <property type="protein sequence ID" value="AAF97960.1"/>
    <property type="status" value="ALT_SEQ"/>
    <property type="molecule type" value="Genomic_DNA"/>
</dbReference>
<dbReference type="EMBL" id="CP002684">
    <property type="protein sequence ID" value="AEE30536.1"/>
    <property type="molecule type" value="Genomic_DNA"/>
</dbReference>
<dbReference type="EMBL" id="CP002684">
    <property type="protein sequence ID" value="AEE30537.1"/>
    <property type="molecule type" value="Genomic_DNA"/>
</dbReference>
<dbReference type="EMBL" id="AM746461">
    <property type="protein sequence ID" value="CAN89261.1"/>
    <property type="molecule type" value="mRNA"/>
</dbReference>
<dbReference type="EMBL" id="AM746462">
    <property type="protein sequence ID" value="CAN89262.1"/>
    <property type="molecule type" value="mRNA"/>
</dbReference>
<dbReference type="RefSeq" id="NP_001117345.1">
    <molecule id="A5PHT0-2"/>
    <property type="nucleotide sequence ID" value="NM_001123873.1"/>
</dbReference>
<dbReference type="RefSeq" id="NP_001117346.1">
    <molecule id="A5PHT0-1"/>
    <property type="nucleotide sequence ID" value="NM_001123874.1"/>
</dbReference>
<dbReference type="SMR" id="A5PHT0"/>
<dbReference type="GlyCosmos" id="A5PHT0">
    <property type="glycosylation" value="4 sites, No reported glycans"/>
</dbReference>
<dbReference type="GlyGen" id="A5PHT0">
    <property type="glycosylation" value="4 sites"/>
</dbReference>
<dbReference type="iPTMnet" id="A5PHT0"/>
<dbReference type="PaxDb" id="3702-AT1G24485.3"/>
<dbReference type="ProteomicsDB" id="242436">
    <molecule id="A5PHT0-1"/>
</dbReference>
<dbReference type="EnsemblPlants" id="AT1G24485.1">
    <molecule id="A5PHT0-2"/>
    <property type="protein sequence ID" value="AT1G24485.1"/>
    <property type="gene ID" value="AT1G24485"/>
</dbReference>
<dbReference type="EnsemblPlants" id="AT1G24485.2">
    <molecule id="A5PHT0-1"/>
    <property type="protein sequence ID" value="AT1G24485.2"/>
    <property type="gene ID" value="AT1G24485"/>
</dbReference>
<dbReference type="GeneID" id="6240649"/>
<dbReference type="Gramene" id="AT1G24485.1">
    <molecule id="A5PHT0-2"/>
    <property type="protein sequence ID" value="AT1G24485.1"/>
    <property type="gene ID" value="AT1G24485"/>
</dbReference>
<dbReference type="Gramene" id="AT1G24485.2">
    <molecule id="A5PHT0-1"/>
    <property type="protein sequence ID" value="AT1G24485.2"/>
    <property type="gene ID" value="AT1G24485"/>
</dbReference>
<dbReference type="KEGG" id="ath:AT1G24485"/>
<dbReference type="Araport" id="AT1G24485"/>
<dbReference type="TAIR" id="AT1G24485"/>
<dbReference type="eggNOG" id="ENOG502QVXJ">
    <property type="taxonomic scope" value="Eukaryota"/>
</dbReference>
<dbReference type="InParanoid" id="A5PHT0"/>
<dbReference type="PhylomeDB" id="A5PHT0"/>
<dbReference type="PRO" id="PR:A5PHT0"/>
<dbReference type="Proteomes" id="UP000006548">
    <property type="component" value="Chromosome 1"/>
</dbReference>
<dbReference type="ExpressionAtlas" id="A5PHT0">
    <property type="expression patterns" value="differential"/>
</dbReference>
<dbReference type="GO" id="GO:0016020">
    <property type="term" value="C:membrane"/>
    <property type="evidence" value="ECO:0007669"/>
    <property type="project" value="UniProtKB-SubCell"/>
</dbReference>
<dbReference type="Gene3D" id="2.60.120.430">
    <property type="entry name" value="Galactose-binding lectin"/>
    <property type="match status" value="1"/>
</dbReference>
<dbReference type="InterPro" id="IPR024788">
    <property type="entry name" value="Malectin-like_Carb-bd_dom"/>
</dbReference>
<dbReference type="PANTHER" id="PTHR45631:SF44">
    <property type="entry name" value="CARBOHYDRATE-BINDING PROTEIN OF THE ER PROTEIN"/>
    <property type="match status" value="1"/>
</dbReference>
<dbReference type="PANTHER" id="PTHR45631">
    <property type="entry name" value="OS07G0107800 PROTEIN-RELATED"/>
    <property type="match status" value="1"/>
</dbReference>
<dbReference type="Pfam" id="PF12819">
    <property type="entry name" value="Malectin_like"/>
    <property type="match status" value="1"/>
</dbReference>
<gene>
    <name type="primary">RWK1</name>
    <name type="synonym">ART1</name>
    <name type="ordered locus">At1g24485</name>
    <name type="ORF">F21J9.15</name>
</gene>